<accession>B4F2B2</accession>
<sequence>MANKKRSASSSRWLQEHFSDKYVQQAKKKGFRSRAWFKLEEIQQSDNIFKPGMTVVDLGAAPGGWSQYVVQQLGNKGRIIACDLLPMDPIVGVDFLQGDFRDELVLKALLDRVGDNKVQVVMSDMAPNMSGTPAVDIPRSMYLVELALDMCRDVLAPGGSFIVKVFQGEGFDEYLGQIRSLFTKVKVRKPDASRSRSREVYIVATGRKL</sequence>
<feature type="chain" id="PRO_1000195005" description="Ribosomal RNA large subunit methyltransferase E">
    <location>
        <begin position="1"/>
        <end position="209"/>
    </location>
</feature>
<feature type="active site" description="Proton acceptor" evidence="1">
    <location>
        <position position="164"/>
    </location>
</feature>
<feature type="binding site" evidence="1">
    <location>
        <position position="63"/>
    </location>
    <ligand>
        <name>S-adenosyl-L-methionine</name>
        <dbReference type="ChEBI" id="CHEBI:59789"/>
    </ligand>
</feature>
<feature type="binding site" evidence="1">
    <location>
        <position position="65"/>
    </location>
    <ligand>
        <name>S-adenosyl-L-methionine</name>
        <dbReference type="ChEBI" id="CHEBI:59789"/>
    </ligand>
</feature>
<feature type="binding site" evidence="1">
    <location>
        <position position="83"/>
    </location>
    <ligand>
        <name>S-adenosyl-L-methionine</name>
        <dbReference type="ChEBI" id="CHEBI:59789"/>
    </ligand>
</feature>
<feature type="binding site" evidence="1">
    <location>
        <position position="99"/>
    </location>
    <ligand>
        <name>S-adenosyl-L-methionine</name>
        <dbReference type="ChEBI" id="CHEBI:59789"/>
    </ligand>
</feature>
<feature type="binding site" evidence="1">
    <location>
        <position position="124"/>
    </location>
    <ligand>
        <name>S-adenosyl-L-methionine</name>
        <dbReference type="ChEBI" id="CHEBI:59789"/>
    </ligand>
</feature>
<reference key="1">
    <citation type="journal article" date="2008" name="J. Bacteriol.">
        <title>Complete genome sequence of uropathogenic Proteus mirabilis, a master of both adherence and motility.</title>
        <authorList>
            <person name="Pearson M.M."/>
            <person name="Sebaihia M."/>
            <person name="Churcher C."/>
            <person name="Quail M.A."/>
            <person name="Seshasayee A.S."/>
            <person name="Luscombe N.M."/>
            <person name="Abdellah Z."/>
            <person name="Arrosmith C."/>
            <person name="Atkin B."/>
            <person name="Chillingworth T."/>
            <person name="Hauser H."/>
            <person name="Jagels K."/>
            <person name="Moule S."/>
            <person name="Mungall K."/>
            <person name="Norbertczak H."/>
            <person name="Rabbinowitsch E."/>
            <person name="Walker D."/>
            <person name="Whithead S."/>
            <person name="Thomson N.R."/>
            <person name="Rather P.N."/>
            <person name="Parkhill J."/>
            <person name="Mobley H.L.T."/>
        </authorList>
    </citation>
    <scope>NUCLEOTIDE SEQUENCE [LARGE SCALE GENOMIC DNA]</scope>
    <source>
        <strain>HI4320</strain>
    </source>
</reference>
<gene>
    <name evidence="1" type="primary">rlmE</name>
    <name evidence="1" type="synonym">ftsJ</name>
    <name evidence="1" type="synonym">rrmJ</name>
    <name type="ordered locus">PMI3411</name>
</gene>
<comment type="function">
    <text evidence="1">Specifically methylates the uridine in position 2552 of 23S rRNA at the 2'-O position of the ribose in the fully assembled 50S ribosomal subunit.</text>
</comment>
<comment type="catalytic activity">
    <reaction evidence="1">
        <text>uridine(2552) in 23S rRNA + S-adenosyl-L-methionine = 2'-O-methyluridine(2552) in 23S rRNA + S-adenosyl-L-homocysteine + H(+)</text>
        <dbReference type="Rhea" id="RHEA:42720"/>
        <dbReference type="Rhea" id="RHEA-COMP:10202"/>
        <dbReference type="Rhea" id="RHEA-COMP:10203"/>
        <dbReference type="ChEBI" id="CHEBI:15378"/>
        <dbReference type="ChEBI" id="CHEBI:57856"/>
        <dbReference type="ChEBI" id="CHEBI:59789"/>
        <dbReference type="ChEBI" id="CHEBI:65315"/>
        <dbReference type="ChEBI" id="CHEBI:74478"/>
        <dbReference type="EC" id="2.1.1.166"/>
    </reaction>
</comment>
<comment type="subcellular location">
    <subcellularLocation>
        <location evidence="1">Cytoplasm</location>
    </subcellularLocation>
</comment>
<comment type="similarity">
    <text evidence="1">Belongs to the class I-like SAM-binding methyltransferase superfamily. RNA methyltransferase RlmE family.</text>
</comment>
<keyword id="KW-0963">Cytoplasm</keyword>
<keyword id="KW-0489">Methyltransferase</keyword>
<keyword id="KW-1185">Reference proteome</keyword>
<keyword id="KW-0698">rRNA processing</keyword>
<keyword id="KW-0949">S-adenosyl-L-methionine</keyword>
<keyword id="KW-0808">Transferase</keyword>
<organism>
    <name type="scientific">Proteus mirabilis (strain HI4320)</name>
    <dbReference type="NCBI Taxonomy" id="529507"/>
    <lineage>
        <taxon>Bacteria</taxon>
        <taxon>Pseudomonadati</taxon>
        <taxon>Pseudomonadota</taxon>
        <taxon>Gammaproteobacteria</taxon>
        <taxon>Enterobacterales</taxon>
        <taxon>Morganellaceae</taxon>
        <taxon>Proteus</taxon>
    </lineage>
</organism>
<protein>
    <recommendedName>
        <fullName evidence="1">Ribosomal RNA large subunit methyltransferase E</fullName>
        <ecNumber evidence="1">2.1.1.166</ecNumber>
    </recommendedName>
    <alternativeName>
        <fullName evidence="1">23S rRNA Um2552 methyltransferase</fullName>
    </alternativeName>
    <alternativeName>
        <fullName evidence="1">rRNA (uridine-2'-O-)-methyltransferase</fullName>
    </alternativeName>
</protein>
<name>RLME_PROMH</name>
<dbReference type="EC" id="2.1.1.166" evidence="1"/>
<dbReference type="EMBL" id="AM942759">
    <property type="protein sequence ID" value="CAR46685.1"/>
    <property type="molecule type" value="Genomic_DNA"/>
</dbReference>
<dbReference type="RefSeq" id="WP_004246244.1">
    <property type="nucleotide sequence ID" value="NC_010554.1"/>
</dbReference>
<dbReference type="SMR" id="B4F2B2"/>
<dbReference type="EnsemblBacteria" id="CAR46685">
    <property type="protein sequence ID" value="CAR46685"/>
    <property type="gene ID" value="PMI3411"/>
</dbReference>
<dbReference type="GeneID" id="6803104"/>
<dbReference type="KEGG" id="pmr:PMI3411"/>
<dbReference type="eggNOG" id="COG0293">
    <property type="taxonomic scope" value="Bacteria"/>
</dbReference>
<dbReference type="HOGENOM" id="CLU_009422_4_0_6"/>
<dbReference type="Proteomes" id="UP000008319">
    <property type="component" value="Chromosome"/>
</dbReference>
<dbReference type="GO" id="GO:0005737">
    <property type="term" value="C:cytoplasm"/>
    <property type="evidence" value="ECO:0007669"/>
    <property type="project" value="UniProtKB-SubCell"/>
</dbReference>
<dbReference type="GO" id="GO:0008650">
    <property type="term" value="F:rRNA (uridine-2'-O-)-methyltransferase activity"/>
    <property type="evidence" value="ECO:0007669"/>
    <property type="project" value="UniProtKB-UniRule"/>
</dbReference>
<dbReference type="FunFam" id="3.40.50.150:FF:000005">
    <property type="entry name" value="Ribosomal RNA large subunit methyltransferase E"/>
    <property type="match status" value="1"/>
</dbReference>
<dbReference type="Gene3D" id="3.40.50.150">
    <property type="entry name" value="Vaccinia Virus protein VP39"/>
    <property type="match status" value="1"/>
</dbReference>
<dbReference type="HAMAP" id="MF_01547">
    <property type="entry name" value="RNA_methyltr_E"/>
    <property type="match status" value="1"/>
</dbReference>
<dbReference type="InterPro" id="IPR050082">
    <property type="entry name" value="RNA_methyltr_RlmE"/>
</dbReference>
<dbReference type="InterPro" id="IPR002877">
    <property type="entry name" value="RNA_MeTrfase_FtsJ_dom"/>
</dbReference>
<dbReference type="InterPro" id="IPR015507">
    <property type="entry name" value="rRNA-MeTfrase_E"/>
</dbReference>
<dbReference type="InterPro" id="IPR004512">
    <property type="entry name" value="rRNA_MeTrfase_gammaproteobac"/>
</dbReference>
<dbReference type="InterPro" id="IPR029063">
    <property type="entry name" value="SAM-dependent_MTases_sf"/>
</dbReference>
<dbReference type="NCBIfam" id="NF008390">
    <property type="entry name" value="PRK11188.1"/>
    <property type="match status" value="1"/>
</dbReference>
<dbReference type="NCBIfam" id="TIGR00438">
    <property type="entry name" value="rrmJ"/>
    <property type="match status" value="1"/>
</dbReference>
<dbReference type="PANTHER" id="PTHR10920">
    <property type="entry name" value="RIBOSOMAL RNA METHYLTRANSFERASE"/>
    <property type="match status" value="1"/>
</dbReference>
<dbReference type="PANTHER" id="PTHR10920:SF18">
    <property type="entry name" value="RRNA METHYLTRANSFERASE 2, MITOCHONDRIAL"/>
    <property type="match status" value="1"/>
</dbReference>
<dbReference type="Pfam" id="PF01728">
    <property type="entry name" value="FtsJ"/>
    <property type="match status" value="1"/>
</dbReference>
<dbReference type="PIRSF" id="PIRSF005461">
    <property type="entry name" value="23S_rRNA_mtase"/>
    <property type="match status" value="1"/>
</dbReference>
<dbReference type="SUPFAM" id="SSF53335">
    <property type="entry name" value="S-adenosyl-L-methionine-dependent methyltransferases"/>
    <property type="match status" value="1"/>
</dbReference>
<proteinExistence type="inferred from homology"/>
<evidence type="ECO:0000255" key="1">
    <source>
        <dbReference type="HAMAP-Rule" id="MF_01547"/>
    </source>
</evidence>